<dbReference type="EMBL" id="CABZ01042196">
    <property type="status" value="NOT_ANNOTATED_CDS"/>
    <property type="molecule type" value="Genomic_DNA"/>
</dbReference>
<dbReference type="EMBL" id="CABZ01087210">
    <property type="status" value="NOT_ANNOTATED_CDS"/>
    <property type="molecule type" value="Genomic_DNA"/>
</dbReference>
<dbReference type="EMBL" id="BX322655">
    <property type="protein sequence ID" value="CAQ14259.1"/>
    <property type="molecule type" value="Genomic_DNA"/>
</dbReference>
<dbReference type="EMBL" id="BC085673">
    <property type="protein sequence ID" value="AAH85673.1"/>
    <property type="molecule type" value="mRNA"/>
</dbReference>
<dbReference type="RefSeq" id="NP_001007329.1">
    <property type="nucleotide sequence ID" value="NM_001007328.1"/>
</dbReference>
<dbReference type="RefSeq" id="XP_017212974.1">
    <property type="nucleotide sequence ID" value="XM_017357485.1"/>
</dbReference>
<dbReference type="SMR" id="Q5U374"/>
<dbReference type="BioGRID" id="93389">
    <property type="interactions" value="2"/>
</dbReference>
<dbReference type="FunCoup" id="Q5U374">
    <property type="interactions" value="444"/>
</dbReference>
<dbReference type="STRING" id="7955.ENSDARP00000131425"/>
<dbReference type="PaxDb" id="7955-ENSDARP00000043814"/>
<dbReference type="GeneID" id="492362"/>
<dbReference type="KEGG" id="dre:108178999"/>
<dbReference type="KEGG" id="dre:492362"/>
<dbReference type="AGR" id="ZFIN:ZDB-GENE-041114-205"/>
<dbReference type="CTD" id="59349"/>
<dbReference type="ZFIN" id="ZDB-GENE-041114-205">
    <property type="gene designation" value="klhl12"/>
</dbReference>
<dbReference type="eggNOG" id="KOG4441">
    <property type="taxonomic scope" value="Eukaryota"/>
</dbReference>
<dbReference type="InParanoid" id="Q5U374"/>
<dbReference type="OrthoDB" id="45365at2759"/>
<dbReference type="TreeFam" id="TF329218"/>
<dbReference type="Reactome" id="R-DRE-4641258">
    <property type="pathway name" value="Degradation of DVL"/>
</dbReference>
<dbReference type="SignaLink" id="Q5U374"/>
<dbReference type="UniPathway" id="UPA00143"/>
<dbReference type="PRO" id="PR:Q5U374"/>
<dbReference type="Proteomes" id="UP000000437">
    <property type="component" value="Chromosome 8"/>
</dbReference>
<dbReference type="GO" id="GO:0030127">
    <property type="term" value="C:COPII vesicle coat"/>
    <property type="evidence" value="ECO:0000250"/>
    <property type="project" value="UniProtKB"/>
</dbReference>
<dbReference type="GO" id="GO:0030134">
    <property type="term" value="C:COPII-coated ER to Golgi transport vesicle"/>
    <property type="evidence" value="ECO:0000250"/>
    <property type="project" value="UniProtKB"/>
</dbReference>
<dbReference type="GO" id="GO:0031463">
    <property type="term" value="C:Cul3-RING ubiquitin ligase complex"/>
    <property type="evidence" value="ECO:0000250"/>
    <property type="project" value="UniProtKB"/>
</dbReference>
<dbReference type="GO" id="GO:0005737">
    <property type="term" value="C:cytoplasm"/>
    <property type="evidence" value="ECO:0000318"/>
    <property type="project" value="GO_Central"/>
</dbReference>
<dbReference type="GO" id="GO:1990756">
    <property type="term" value="F:ubiquitin-like ligase-substrate adaptor activity"/>
    <property type="evidence" value="ECO:0000318"/>
    <property type="project" value="GO_Central"/>
</dbReference>
<dbReference type="GO" id="GO:0009952">
    <property type="term" value="P:anterior/posterior pattern specification"/>
    <property type="evidence" value="ECO:0000316"/>
    <property type="project" value="ZFIN"/>
</dbReference>
<dbReference type="GO" id="GO:0060028">
    <property type="term" value="P:convergent extension involved in axis elongation"/>
    <property type="evidence" value="ECO:0000316"/>
    <property type="project" value="ZFIN"/>
</dbReference>
<dbReference type="GO" id="GO:0048208">
    <property type="term" value="P:COPII vesicle coating"/>
    <property type="evidence" value="ECO:0000250"/>
    <property type="project" value="UniProtKB"/>
</dbReference>
<dbReference type="GO" id="GO:0006888">
    <property type="term" value="P:endoplasmic reticulum to Golgi vesicle-mediated transport"/>
    <property type="evidence" value="ECO:0000250"/>
    <property type="project" value="UniProtKB"/>
</dbReference>
<dbReference type="GO" id="GO:0014032">
    <property type="term" value="P:neural crest cell development"/>
    <property type="evidence" value="ECO:0000250"/>
    <property type="project" value="UniProtKB"/>
</dbReference>
<dbReference type="GO" id="GO:0014029">
    <property type="term" value="P:neural crest formation"/>
    <property type="evidence" value="ECO:0000250"/>
    <property type="project" value="UniProtKB"/>
</dbReference>
<dbReference type="GO" id="GO:0043161">
    <property type="term" value="P:proteasome-mediated ubiquitin-dependent protein catabolic process"/>
    <property type="evidence" value="ECO:0000318"/>
    <property type="project" value="GO_Central"/>
</dbReference>
<dbReference type="GO" id="GO:0006513">
    <property type="term" value="P:protein monoubiquitination"/>
    <property type="evidence" value="ECO:0000250"/>
    <property type="project" value="UniProtKB"/>
</dbReference>
<dbReference type="GO" id="GO:0016055">
    <property type="term" value="P:Wnt signaling pathway"/>
    <property type="evidence" value="ECO:0000315"/>
    <property type="project" value="ZFIN"/>
</dbReference>
<dbReference type="CDD" id="cd18452">
    <property type="entry name" value="BACK_KLHL12"/>
    <property type="match status" value="1"/>
</dbReference>
<dbReference type="CDD" id="cd18242">
    <property type="entry name" value="BTB_POZ_KLHL12_C3IP1_DKIR"/>
    <property type="match status" value="1"/>
</dbReference>
<dbReference type="FunFam" id="2.120.10.80:FF:000011">
    <property type="entry name" value="Kelch like family member 12"/>
    <property type="match status" value="1"/>
</dbReference>
<dbReference type="FunFam" id="1.25.40.420:FF:000001">
    <property type="entry name" value="Kelch-like family member 12"/>
    <property type="match status" value="1"/>
</dbReference>
<dbReference type="FunFam" id="3.30.710.10:FF:000001">
    <property type="entry name" value="Kelch-like family member 20"/>
    <property type="match status" value="1"/>
</dbReference>
<dbReference type="Gene3D" id="1.25.40.420">
    <property type="match status" value="1"/>
</dbReference>
<dbReference type="Gene3D" id="2.120.10.80">
    <property type="entry name" value="Kelch-type beta propeller"/>
    <property type="match status" value="1"/>
</dbReference>
<dbReference type="Gene3D" id="3.30.710.10">
    <property type="entry name" value="Potassium Channel Kv1.1, Chain A"/>
    <property type="match status" value="1"/>
</dbReference>
<dbReference type="InterPro" id="IPR011705">
    <property type="entry name" value="BACK"/>
</dbReference>
<dbReference type="InterPro" id="IPR017096">
    <property type="entry name" value="BTB-kelch_protein"/>
</dbReference>
<dbReference type="InterPro" id="IPR000210">
    <property type="entry name" value="BTB/POZ_dom"/>
</dbReference>
<dbReference type="InterPro" id="IPR015915">
    <property type="entry name" value="Kelch-typ_b-propeller"/>
</dbReference>
<dbReference type="InterPro" id="IPR006652">
    <property type="entry name" value="Kelch_1"/>
</dbReference>
<dbReference type="InterPro" id="IPR011333">
    <property type="entry name" value="SKP1/BTB/POZ_sf"/>
</dbReference>
<dbReference type="PANTHER" id="PTHR24412">
    <property type="entry name" value="KELCH PROTEIN"/>
    <property type="match status" value="1"/>
</dbReference>
<dbReference type="PANTHER" id="PTHR24412:SF494">
    <property type="entry name" value="KELCH-LIKE PROTEIN 12"/>
    <property type="match status" value="1"/>
</dbReference>
<dbReference type="Pfam" id="PF07707">
    <property type="entry name" value="BACK"/>
    <property type="match status" value="1"/>
</dbReference>
<dbReference type="Pfam" id="PF00651">
    <property type="entry name" value="BTB"/>
    <property type="match status" value="1"/>
</dbReference>
<dbReference type="Pfam" id="PF24681">
    <property type="entry name" value="Kelch_KLHDC2_KLHL20_DRC7"/>
    <property type="match status" value="2"/>
</dbReference>
<dbReference type="PIRSF" id="PIRSF037037">
    <property type="entry name" value="Kelch-like_protein_gigaxonin"/>
    <property type="match status" value="1"/>
</dbReference>
<dbReference type="PRINTS" id="PR00501">
    <property type="entry name" value="KELCHREPEAT"/>
</dbReference>
<dbReference type="SMART" id="SM00875">
    <property type="entry name" value="BACK"/>
    <property type="match status" value="1"/>
</dbReference>
<dbReference type="SMART" id="SM00225">
    <property type="entry name" value="BTB"/>
    <property type="match status" value="1"/>
</dbReference>
<dbReference type="SMART" id="SM00612">
    <property type="entry name" value="Kelch"/>
    <property type="match status" value="6"/>
</dbReference>
<dbReference type="SUPFAM" id="SSF117281">
    <property type="entry name" value="Kelch motif"/>
    <property type="match status" value="1"/>
</dbReference>
<dbReference type="SUPFAM" id="SSF54695">
    <property type="entry name" value="POZ domain"/>
    <property type="match status" value="1"/>
</dbReference>
<dbReference type="PROSITE" id="PS50097">
    <property type="entry name" value="BTB"/>
    <property type="match status" value="1"/>
</dbReference>
<proteinExistence type="evidence at transcript level"/>
<comment type="function">
    <text evidence="1 3">Substrate-specific adapter of a BCR (BTB-CUL3-RBX1) E3 ubiquitin ligase complex that acts as a negative regulator of Wnt signaling pathway and ER-Golgi transport. The BCR(KLHL12) complex is involved in ER-Golgi transport by regulating the size of COPII coats, thereby playing a key role in collagen export, which is required for embryonic stem (ES) cells division (By similarity). Negatively regulates the Wnt signaling pathway, possibly via the targeted ubiquitination and subsequent proteolysis of dvl2 and dvl3 (PubMed:16547521). Regulates convergent-extension movements during early embryonic development (PubMed:16547521).</text>
</comment>
<comment type="pathway">
    <text>Protein modification; protein ubiquitination.</text>
</comment>
<comment type="subunit">
    <text evidence="1">Component of the BCR(KLHL12) E3 ubiquitin ligase complex.</text>
</comment>
<comment type="subcellular location">
    <subcellularLocation>
        <location evidence="1">Cytoplasmic vesicle</location>
        <location evidence="1">COPII-coated vesicle</location>
    </subcellularLocation>
</comment>
<comment type="developmental stage">
    <text evidence="3">Expressed ubiquitously throughout development.</text>
</comment>
<protein>
    <recommendedName>
        <fullName>Kelch-like protein 12</fullName>
    </recommendedName>
</protein>
<accession>Q5U374</accession>
<accession>B0S5Y1</accession>
<name>KLH12_DANRE</name>
<reference key="1">
    <citation type="journal article" date="2013" name="Nature">
        <title>The zebrafish reference genome sequence and its relationship to the human genome.</title>
        <authorList>
            <person name="Howe K."/>
            <person name="Clark M.D."/>
            <person name="Torroja C.F."/>
            <person name="Torrance J."/>
            <person name="Berthelot C."/>
            <person name="Muffato M."/>
            <person name="Collins J.E."/>
            <person name="Humphray S."/>
            <person name="McLaren K."/>
            <person name="Matthews L."/>
            <person name="McLaren S."/>
            <person name="Sealy I."/>
            <person name="Caccamo M."/>
            <person name="Churcher C."/>
            <person name="Scott C."/>
            <person name="Barrett J.C."/>
            <person name="Koch R."/>
            <person name="Rauch G.J."/>
            <person name="White S."/>
            <person name="Chow W."/>
            <person name="Kilian B."/>
            <person name="Quintais L.T."/>
            <person name="Guerra-Assuncao J.A."/>
            <person name="Zhou Y."/>
            <person name="Gu Y."/>
            <person name="Yen J."/>
            <person name="Vogel J.H."/>
            <person name="Eyre T."/>
            <person name="Redmond S."/>
            <person name="Banerjee R."/>
            <person name="Chi J."/>
            <person name="Fu B."/>
            <person name="Langley E."/>
            <person name="Maguire S.F."/>
            <person name="Laird G.K."/>
            <person name="Lloyd D."/>
            <person name="Kenyon E."/>
            <person name="Donaldson S."/>
            <person name="Sehra H."/>
            <person name="Almeida-King J."/>
            <person name="Loveland J."/>
            <person name="Trevanion S."/>
            <person name="Jones M."/>
            <person name="Quail M."/>
            <person name="Willey D."/>
            <person name="Hunt A."/>
            <person name="Burton J."/>
            <person name="Sims S."/>
            <person name="McLay K."/>
            <person name="Plumb B."/>
            <person name="Davis J."/>
            <person name="Clee C."/>
            <person name="Oliver K."/>
            <person name="Clark R."/>
            <person name="Riddle C."/>
            <person name="Elliot D."/>
            <person name="Threadgold G."/>
            <person name="Harden G."/>
            <person name="Ware D."/>
            <person name="Begum S."/>
            <person name="Mortimore B."/>
            <person name="Kerry G."/>
            <person name="Heath P."/>
            <person name="Phillimore B."/>
            <person name="Tracey A."/>
            <person name="Corby N."/>
            <person name="Dunn M."/>
            <person name="Johnson C."/>
            <person name="Wood J."/>
            <person name="Clark S."/>
            <person name="Pelan S."/>
            <person name="Griffiths G."/>
            <person name="Smith M."/>
            <person name="Glithero R."/>
            <person name="Howden P."/>
            <person name="Barker N."/>
            <person name="Lloyd C."/>
            <person name="Stevens C."/>
            <person name="Harley J."/>
            <person name="Holt K."/>
            <person name="Panagiotidis G."/>
            <person name="Lovell J."/>
            <person name="Beasley H."/>
            <person name="Henderson C."/>
            <person name="Gordon D."/>
            <person name="Auger K."/>
            <person name="Wright D."/>
            <person name="Collins J."/>
            <person name="Raisen C."/>
            <person name="Dyer L."/>
            <person name="Leung K."/>
            <person name="Robertson L."/>
            <person name="Ambridge K."/>
            <person name="Leongamornlert D."/>
            <person name="McGuire S."/>
            <person name="Gilderthorp R."/>
            <person name="Griffiths C."/>
            <person name="Manthravadi D."/>
            <person name="Nichol S."/>
            <person name="Barker G."/>
            <person name="Whitehead S."/>
            <person name="Kay M."/>
            <person name="Brown J."/>
            <person name="Murnane C."/>
            <person name="Gray E."/>
            <person name="Humphries M."/>
            <person name="Sycamore N."/>
            <person name="Barker D."/>
            <person name="Saunders D."/>
            <person name="Wallis J."/>
            <person name="Babbage A."/>
            <person name="Hammond S."/>
            <person name="Mashreghi-Mohammadi M."/>
            <person name="Barr L."/>
            <person name="Martin S."/>
            <person name="Wray P."/>
            <person name="Ellington A."/>
            <person name="Matthews N."/>
            <person name="Ellwood M."/>
            <person name="Woodmansey R."/>
            <person name="Clark G."/>
            <person name="Cooper J."/>
            <person name="Tromans A."/>
            <person name="Grafham D."/>
            <person name="Skuce C."/>
            <person name="Pandian R."/>
            <person name="Andrews R."/>
            <person name="Harrison E."/>
            <person name="Kimberley A."/>
            <person name="Garnett J."/>
            <person name="Fosker N."/>
            <person name="Hall R."/>
            <person name="Garner P."/>
            <person name="Kelly D."/>
            <person name="Bird C."/>
            <person name="Palmer S."/>
            <person name="Gehring I."/>
            <person name="Berger A."/>
            <person name="Dooley C.M."/>
            <person name="Ersan-Urun Z."/>
            <person name="Eser C."/>
            <person name="Geiger H."/>
            <person name="Geisler M."/>
            <person name="Karotki L."/>
            <person name="Kirn A."/>
            <person name="Konantz J."/>
            <person name="Konantz M."/>
            <person name="Oberlander M."/>
            <person name="Rudolph-Geiger S."/>
            <person name="Teucke M."/>
            <person name="Lanz C."/>
            <person name="Raddatz G."/>
            <person name="Osoegawa K."/>
            <person name="Zhu B."/>
            <person name="Rapp A."/>
            <person name="Widaa S."/>
            <person name="Langford C."/>
            <person name="Yang F."/>
            <person name="Schuster S.C."/>
            <person name="Carter N.P."/>
            <person name="Harrow J."/>
            <person name="Ning Z."/>
            <person name="Herrero J."/>
            <person name="Searle S.M."/>
            <person name="Enright A."/>
            <person name="Geisler R."/>
            <person name="Plasterk R.H."/>
            <person name="Lee C."/>
            <person name="Westerfield M."/>
            <person name="de Jong P.J."/>
            <person name="Zon L.I."/>
            <person name="Postlethwait J.H."/>
            <person name="Nusslein-Volhard C."/>
            <person name="Hubbard T.J."/>
            <person name="Roest Crollius H."/>
            <person name="Rogers J."/>
            <person name="Stemple D.L."/>
        </authorList>
    </citation>
    <scope>NUCLEOTIDE SEQUENCE [LARGE SCALE GENOMIC DNA]</scope>
    <source>
        <strain>Tuebingen</strain>
    </source>
</reference>
<reference key="2">
    <citation type="submission" date="2004-11" db="EMBL/GenBank/DDBJ databases">
        <authorList>
            <consortium name="NIH - Zebrafish Gene Collection (ZGC) project"/>
        </authorList>
    </citation>
    <scope>NUCLEOTIDE SEQUENCE [LARGE SCALE MRNA]</scope>
    <source>
        <strain>AB</strain>
    </source>
</reference>
<reference key="3">
    <citation type="journal article" date="2006" name="Nat. Cell Biol.">
        <title>The KLHL12-cullin-3 ubiquitin ligase negatively regulates the Wnt-beta-catenin pathway by targeting Dishevelled for degradation.</title>
        <authorList>
            <person name="Angers S."/>
            <person name="Thorpe C.J."/>
            <person name="Biechele T.L."/>
            <person name="Goldenberg S.J."/>
            <person name="Zheng N."/>
            <person name="Maccoss M.J."/>
            <person name="Moon R.T."/>
        </authorList>
    </citation>
    <scope>FUNCTION</scope>
    <scope>DEVELOPMENTAL STAGE</scope>
</reference>
<feature type="chain" id="PRO_0000234352" description="Kelch-like protein 12">
    <location>
        <begin position="1"/>
        <end position="564"/>
    </location>
</feature>
<feature type="domain" description="BTB" evidence="2">
    <location>
        <begin position="29"/>
        <end position="96"/>
    </location>
</feature>
<feature type="domain" description="BACK">
    <location>
        <begin position="131"/>
        <end position="232"/>
    </location>
</feature>
<feature type="repeat" description="Kelch 1">
    <location>
        <begin position="278"/>
        <end position="325"/>
    </location>
</feature>
<feature type="repeat" description="Kelch 2">
    <location>
        <begin position="327"/>
        <end position="375"/>
    </location>
</feature>
<feature type="repeat" description="Kelch 3">
    <location>
        <begin position="376"/>
        <end position="422"/>
    </location>
</feature>
<feature type="repeat" description="Kelch 4">
    <location>
        <begin position="423"/>
        <end position="469"/>
    </location>
</feature>
<feature type="repeat" description="Kelch 5">
    <location>
        <begin position="471"/>
        <end position="516"/>
    </location>
</feature>
<feature type="repeat" description="Kelch 6">
    <location>
        <begin position="518"/>
        <end position="563"/>
    </location>
</feature>
<feature type="sequence conflict" description="In Ref. 2; AAH85673." evidence="4" ref="2">
    <original>E</original>
    <variation>V</variation>
    <location>
        <position position="183"/>
    </location>
</feature>
<sequence length="564" mass="62963">MAPKDIMTNSHAKSILNAMNALRKSNTLCDITLRVEGTDFPAHRIVLAACSDYFCAMFTSELAEKGKSFVDIQGLTASTMEILLDFVYTETVLVTVENVQELLPAACLLQLKGVKRACCDFLNSQLDPSNCLGIRDFAETHNCLDLMQAAELFSQKHFAEVVQQEEFMLLSQSEVEKLIKCDEIQVDSEEPVFEAVLNWVKHNRKEREPYLPDLLEYVRMPLLTPRYITDVIDAEPLIRCSLPCRDLVDEAKKFHLRPELRSEMQSPRTQARLGAKEVLLVIGGFGSQQSPIDIVEKYDPKTREWSFLPNIARKRRYVATVALNDRVYVIGGYDGRSRLSSVECLDYTADEDGVWYSVATMNVRRGLAGATTLGDMIYVAGGFDGSRRHTSMERYDPNIDQWSMLGDMQTAREGAGLVVASGLIYCLGGYDGLNILNSVERYDPHTGHWTSVTPMANKRSGAGVALLNDHIYVVGGFDGTAHLSSVEVYNIRTDYWTTVANMTTPRCYVGATVLRGRLYAIAGYDGNSLLSSIECYDPVIDSWEVVTSMATQRCDAGVCVLREK</sequence>
<gene>
    <name type="primary">klhl12</name>
    <name type="ORF">si:dkeyp-53e12.5</name>
    <name type="ORF">zgc:92570</name>
</gene>
<organism>
    <name type="scientific">Danio rerio</name>
    <name type="common">Zebrafish</name>
    <name type="synonym">Brachydanio rerio</name>
    <dbReference type="NCBI Taxonomy" id="7955"/>
    <lineage>
        <taxon>Eukaryota</taxon>
        <taxon>Metazoa</taxon>
        <taxon>Chordata</taxon>
        <taxon>Craniata</taxon>
        <taxon>Vertebrata</taxon>
        <taxon>Euteleostomi</taxon>
        <taxon>Actinopterygii</taxon>
        <taxon>Neopterygii</taxon>
        <taxon>Teleostei</taxon>
        <taxon>Ostariophysi</taxon>
        <taxon>Cypriniformes</taxon>
        <taxon>Danionidae</taxon>
        <taxon>Danioninae</taxon>
        <taxon>Danio</taxon>
    </lineage>
</organism>
<evidence type="ECO:0000250" key="1">
    <source>
        <dbReference type="UniProtKB" id="Q53G59"/>
    </source>
</evidence>
<evidence type="ECO:0000255" key="2">
    <source>
        <dbReference type="PROSITE-ProRule" id="PRU00037"/>
    </source>
</evidence>
<evidence type="ECO:0000269" key="3">
    <source>
    </source>
</evidence>
<evidence type="ECO:0000305" key="4"/>
<keyword id="KW-0968">Cytoplasmic vesicle</keyword>
<keyword id="KW-0217">Developmental protein</keyword>
<keyword id="KW-0931">ER-Golgi transport</keyword>
<keyword id="KW-0880">Kelch repeat</keyword>
<keyword id="KW-1185">Reference proteome</keyword>
<keyword id="KW-0677">Repeat</keyword>
<keyword id="KW-0813">Transport</keyword>
<keyword id="KW-0833">Ubl conjugation pathway</keyword>
<keyword id="KW-0879">Wnt signaling pathway</keyword>